<organism>
    <name type="scientific">Schizosaccharomyces pombe (strain 972 / ATCC 24843)</name>
    <name type="common">Fission yeast</name>
    <dbReference type="NCBI Taxonomy" id="284812"/>
    <lineage>
        <taxon>Eukaryota</taxon>
        <taxon>Fungi</taxon>
        <taxon>Dikarya</taxon>
        <taxon>Ascomycota</taxon>
        <taxon>Taphrinomycotina</taxon>
        <taxon>Schizosaccharomycetes</taxon>
        <taxon>Schizosaccharomycetales</taxon>
        <taxon>Schizosaccharomycetaceae</taxon>
        <taxon>Schizosaccharomyces</taxon>
    </lineage>
</organism>
<feature type="transit peptide" description="Mitochondrion">
    <location>
        <begin position="1"/>
        <end position="32"/>
    </location>
</feature>
<feature type="chain" id="PRO_0000315957" description="Large ribosomal subunit protein bL9m">
    <location>
        <begin position="33"/>
        <end position="101"/>
    </location>
</feature>
<sequence>MSIMKPTTRFFRFNSLELAVSPFQRIYGQLRFLRKQPKPFLVKLLNNEVSKLGRQGDVVSVTRGYYRNTLFPKKQAIAVDALKSMKAHLLQGSEFSTKTKE</sequence>
<comment type="function">
    <text evidence="1">Component of the mitochondrial ribosome (mitoribosome), a dedicated translation machinery responsible for the synthesis of mitochondrial genome-encoded proteins, including at least some of the essential transmembrane subunits of the mitochondrial respiratory chain. The mitoribosomes are attached to the mitochondrial inner membrane and translation products are cotranslationally integrated into the membrane.</text>
</comment>
<comment type="subunit">
    <text evidence="1">Component of the mitochondrial large ribosomal subunit (mt-LSU). Mature yeast 74S mitochondrial ribosomes consist of a small (37S) and a large (54S) subunit. The 37S small subunit contains a 15S ribosomal RNA (15S mt-rRNA) and at least 32 different proteins. The 54S large subunit contains a 21S rRNA (21S mt-rRNA) and at least 45 different proteins.</text>
</comment>
<comment type="subcellular location">
    <subcellularLocation>
        <location evidence="2">Mitochondrion</location>
    </subcellularLocation>
</comment>
<comment type="similarity">
    <text evidence="3">Belongs to the bacterial ribosomal protein bL9 family.</text>
</comment>
<protein>
    <recommendedName>
        <fullName evidence="3">Large ribosomal subunit protein bL9m</fullName>
    </recommendedName>
    <alternativeName>
        <fullName>Probable 54S ribosomal protein L9, mitochondrial</fullName>
    </alternativeName>
</protein>
<proteinExistence type="inferred from homology"/>
<name>RML9_SCHPO</name>
<dbReference type="EMBL" id="CU329672">
    <property type="protein sequence ID" value="CAB72124.1"/>
    <property type="molecule type" value="Genomic_DNA"/>
</dbReference>
<dbReference type="RefSeq" id="NP_588259.1">
    <property type="nucleotide sequence ID" value="NM_001023249.2"/>
</dbReference>
<dbReference type="BioGRID" id="275395">
    <property type="interactions" value="4"/>
</dbReference>
<dbReference type="ComplexPortal" id="CPX-10323">
    <property type="entry name" value="54S mitochondrial large ribosomal subunit"/>
</dbReference>
<dbReference type="STRING" id="284812.Q9P801"/>
<dbReference type="SwissPalm" id="Q9P801"/>
<dbReference type="PaxDb" id="4896-SPCC777.17c.1"/>
<dbReference type="EnsemblFungi" id="SPCC777.17c.1">
    <property type="protein sequence ID" value="SPCC777.17c.1:pep"/>
    <property type="gene ID" value="SPCC777.17c"/>
</dbReference>
<dbReference type="KEGG" id="spo:2538814"/>
<dbReference type="PomBase" id="SPCC777.17c"/>
<dbReference type="VEuPathDB" id="FungiDB:SPCC777.17c"/>
<dbReference type="eggNOG" id="KOG4607">
    <property type="taxonomic scope" value="Eukaryota"/>
</dbReference>
<dbReference type="HOGENOM" id="CLU_2293315_0_0_1"/>
<dbReference type="InParanoid" id="Q9P801"/>
<dbReference type="PRO" id="PR:Q9P801"/>
<dbReference type="Proteomes" id="UP000002485">
    <property type="component" value="Chromosome III"/>
</dbReference>
<dbReference type="GO" id="GO:0005762">
    <property type="term" value="C:mitochondrial large ribosomal subunit"/>
    <property type="evidence" value="ECO:0000255"/>
    <property type="project" value="PomBase"/>
</dbReference>
<dbReference type="GO" id="GO:0005739">
    <property type="term" value="C:mitochondrion"/>
    <property type="evidence" value="ECO:0007005"/>
    <property type="project" value="PomBase"/>
</dbReference>
<dbReference type="GO" id="GO:0003735">
    <property type="term" value="F:structural constituent of ribosome"/>
    <property type="evidence" value="ECO:0000255"/>
    <property type="project" value="PomBase"/>
</dbReference>
<dbReference type="GO" id="GO:0032543">
    <property type="term" value="P:mitochondrial translation"/>
    <property type="evidence" value="ECO:0000250"/>
    <property type="project" value="PomBase"/>
</dbReference>
<dbReference type="Gene3D" id="3.40.5.10">
    <property type="entry name" value="Ribosomal protein L9, N-terminal domain"/>
    <property type="match status" value="1"/>
</dbReference>
<dbReference type="InterPro" id="IPR009027">
    <property type="entry name" value="Ribosomal_bL9/RNase_H1_N"/>
</dbReference>
<dbReference type="InterPro" id="IPR020070">
    <property type="entry name" value="Ribosomal_bL9_N"/>
</dbReference>
<dbReference type="InterPro" id="IPR036935">
    <property type="entry name" value="Ribosomal_bL9_N_sf"/>
</dbReference>
<dbReference type="Pfam" id="PF01281">
    <property type="entry name" value="Ribosomal_L9_N"/>
    <property type="match status" value="1"/>
</dbReference>
<dbReference type="SUPFAM" id="SSF55658">
    <property type="entry name" value="L9 N-domain-like"/>
    <property type="match status" value="1"/>
</dbReference>
<accession>Q9P801</accession>
<evidence type="ECO:0000250" key="1">
    <source>
        <dbReference type="UniProtKB" id="P53724"/>
    </source>
</evidence>
<evidence type="ECO:0000269" key="2">
    <source>
    </source>
</evidence>
<evidence type="ECO:0000305" key="3"/>
<reference key="1">
    <citation type="journal article" date="2002" name="Nature">
        <title>The genome sequence of Schizosaccharomyces pombe.</title>
        <authorList>
            <person name="Wood V."/>
            <person name="Gwilliam R."/>
            <person name="Rajandream M.A."/>
            <person name="Lyne M.H."/>
            <person name="Lyne R."/>
            <person name="Stewart A."/>
            <person name="Sgouros J.G."/>
            <person name="Peat N."/>
            <person name="Hayles J."/>
            <person name="Baker S.G."/>
            <person name="Basham D."/>
            <person name="Bowman S."/>
            <person name="Brooks K."/>
            <person name="Brown D."/>
            <person name="Brown S."/>
            <person name="Chillingworth T."/>
            <person name="Churcher C.M."/>
            <person name="Collins M."/>
            <person name="Connor R."/>
            <person name="Cronin A."/>
            <person name="Davis P."/>
            <person name="Feltwell T."/>
            <person name="Fraser A."/>
            <person name="Gentles S."/>
            <person name="Goble A."/>
            <person name="Hamlin N."/>
            <person name="Harris D.E."/>
            <person name="Hidalgo J."/>
            <person name="Hodgson G."/>
            <person name="Holroyd S."/>
            <person name="Hornsby T."/>
            <person name="Howarth S."/>
            <person name="Huckle E.J."/>
            <person name="Hunt S."/>
            <person name="Jagels K."/>
            <person name="James K.D."/>
            <person name="Jones L."/>
            <person name="Jones M."/>
            <person name="Leather S."/>
            <person name="McDonald S."/>
            <person name="McLean J."/>
            <person name="Mooney P."/>
            <person name="Moule S."/>
            <person name="Mungall K.L."/>
            <person name="Murphy L.D."/>
            <person name="Niblett D."/>
            <person name="Odell C."/>
            <person name="Oliver K."/>
            <person name="O'Neil S."/>
            <person name="Pearson D."/>
            <person name="Quail M.A."/>
            <person name="Rabbinowitsch E."/>
            <person name="Rutherford K.M."/>
            <person name="Rutter S."/>
            <person name="Saunders D."/>
            <person name="Seeger K."/>
            <person name="Sharp S."/>
            <person name="Skelton J."/>
            <person name="Simmonds M.N."/>
            <person name="Squares R."/>
            <person name="Squares S."/>
            <person name="Stevens K."/>
            <person name="Taylor K."/>
            <person name="Taylor R.G."/>
            <person name="Tivey A."/>
            <person name="Walsh S.V."/>
            <person name="Warren T."/>
            <person name="Whitehead S."/>
            <person name="Woodward J.R."/>
            <person name="Volckaert G."/>
            <person name="Aert R."/>
            <person name="Robben J."/>
            <person name="Grymonprez B."/>
            <person name="Weltjens I."/>
            <person name="Vanstreels E."/>
            <person name="Rieger M."/>
            <person name="Schaefer M."/>
            <person name="Mueller-Auer S."/>
            <person name="Gabel C."/>
            <person name="Fuchs M."/>
            <person name="Duesterhoeft A."/>
            <person name="Fritzc C."/>
            <person name="Holzer E."/>
            <person name="Moestl D."/>
            <person name="Hilbert H."/>
            <person name="Borzym K."/>
            <person name="Langer I."/>
            <person name="Beck A."/>
            <person name="Lehrach H."/>
            <person name="Reinhardt R."/>
            <person name="Pohl T.M."/>
            <person name="Eger P."/>
            <person name="Zimmermann W."/>
            <person name="Wedler H."/>
            <person name="Wambutt R."/>
            <person name="Purnelle B."/>
            <person name="Goffeau A."/>
            <person name="Cadieu E."/>
            <person name="Dreano S."/>
            <person name="Gloux S."/>
            <person name="Lelaure V."/>
            <person name="Mottier S."/>
            <person name="Galibert F."/>
            <person name="Aves S.J."/>
            <person name="Xiang Z."/>
            <person name="Hunt C."/>
            <person name="Moore K."/>
            <person name="Hurst S.M."/>
            <person name="Lucas M."/>
            <person name="Rochet M."/>
            <person name="Gaillardin C."/>
            <person name="Tallada V.A."/>
            <person name="Garzon A."/>
            <person name="Thode G."/>
            <person name="Daga R.R."/>
            <person name="Cruzado L."/>
            <person name="Jimenez J."/>
            <person name="Sanchez M."/>
            <person name="del Rey F."/>
            <person name="Benito J."/>
            <person name="Dominguez A."/>
            <person name="Revuelta J.L."/>
            <person name="Moreno S."/>
            <person name="Armstrong J."/>
            <person name="Forsburg S.L."/>
            <person name="Cerutti L."/>
            <person name="Lowe T."/>
            <person name="McCombie W.R."/>
            <person name="Paulsen I."/>
            <person name="Potashkin J."/>
            <person name="Shpakovski G.V."/>
            <person name="Ussery D."/>
            <person name="Barrell B.G."/>
            <person name="Nurse P."/>
        </authorList>
    </citation>
    <scope>NUCLEOTIDE SEQUENCE [LARGE SCALE GENOMIC DNA]</scope>
    <source>
        <strain>972 / ATCC 24843</strain>
    </source>
</reference>
<reference key="2">
    <citation type="journal article" date="2006" name="Nat. Biotechnol.">
        <title>ORFeome cloning and global analysis of protein localization in the fission yeast Schizosaccharomyces pombe.</title>
        <authorList>
            <person name="Matsuyama A."/>
            <person name="Arai R."/>
            <person name="Yashiroda Y."/>
            <person name="Shirai A."/>
            <person name="Kamata A."/>
            <person name="Sekido S."/>
            <person name="Kobayashi Y."/>
            <person name="Hashimoto A."/>
            <person name="Hamamoto M."/>
            <person name="Hiraoka Y."/>
            <person name="Horinouchi S."/>
            <person name="Yoshida M."/>
        </authorList>
    </citation>
    <scope>SUBCELLULAR LOCATION [LARGE SCALE ANALYSIS]</scope>
</reference>
<gene>
    <name type="ORF">SPCC777.17c</name>
</gene>
<keyword id="KW-0496">Mitochondrion</keyword>
<keyword id="KW-1185">Reference proteome</keyword>
<keyword id="KW-0687">Ribonucleoprotein</keyword>
<keyword id="KW-0689">Ribosomal protein</keyword>
<keyword id="KW-0809">Transit peptide</keyword>